<comment type="similarity">
    <text evidence="1">Belongs to the universal ribosomal protein uS2 family.</text>
</comment>
<keyword id="KW-1185">Reference proteome</keyword>
<keyword id="KW-0687">Ribonucleoprotein</keyword>
<keyword id="KW-0689">Ribosomal protein</keyword>
<reference key="1">
    <citation type="journal article" date="2001" name="DNA Res.">
        <title>Complete genomic sequence of the filamentous nitrogen-fixing cyanobacterium Anabaena sp. strain PCC 7120.</title>
        <authorList>
            <person name="Kaneko T."/>
            <person name="Nakamura Y."/>
            <person name="Wolk C.P."/>
            <person name="Kuritz T."/>
            <person name="Sasamoto S."/>
            <person name="Watanabe A."/>
            <person name="Iriguchi M."/>
            <person name="Ishikawa A."/>
            <person name="Kawashima K."/>
            <person name="Kimura T."/>
            <person name="Kishida Y."/>
            <person name="Kohara M."/>
            <person name="Matsumoto M."/>
            <person name="Matsuno A."/>
            <person name="Muraki A."/>
            <person name="Nakazaki N."/>
            <person name="Shimpo S."/>
            <person name="Sugimoto M."/>
            <person name="Takazawa M."/>
            <person name="Yamada M."/>
            <person name="Yasuda M."/>
            <person name="Tabata S."/>
        </authorList>
    </citation>
    <scope>NUCLEOTIDE SEQUENCE [LARGE SCALE GENOMIC DNA]</scope>
    <source>
        <strain>PCC 7120 / SAG 25.82 / UTEX 2576</strain>
    </source>
</reference>
<accession>Q8YMY2</accession>
<evidence type="ECO:0000255" key="1">
    <source>
        <dbReference type="HAMAP-Rule" id="MF_00291"/>
    </source>
</evidence>
<evidence type="ECO:0000256" key="2">
    <source>
        <dbReference type="SAM" id="MobiDB-lite"/>
    </source>
</evidence>
<evidence type="ECO:0000305" key="3"/>
<name>RS2_NOSS1</name>
<protein>
    <recommendedName>
        <fullName evidence="1">Small ribosomal subunit protein uS2</fullName>
    </recommendedName>
    <alternativeName>
        <fullName evidence="3">30S ribosomal protein S2</fullName>
    </alternativeName>
</protein>
<dbReference type="EMBL" id="BA000019">
    <property type="protein sequence ID" value="BAB76491.1"/>
    <property type="molecule type" value="Genomic_DNA"/>
</dbReference>
<dbReference type="PIR" id="AH2404">
    <property type="entry name" value="AH2404"/>
</dbReference>
<dbReference type="RefSeq" id="WP_010998922.1">
    <property type="nucleotide sequence ID" value="NZ_RSCN01000035.1"/>
</dbReference>
<dbReference type="SMR" id="Q8YMY2"/>
<dbReference type="STRING" id="103690.gene:10496845"/>
<dbReference type="KEGG" id="ana:all4792"/>
<dbReference type="eggNOG" id="COG0052">
    <property type="taxonomic scope" value="Bacteria"/>
</dbReference>
<dbReference type="OrthoDB" id="9808036at2"/>
<dbReference type="Proteomes" id="UP000002483">
    <property type="component" value="Chromosome"/>
</dbReference>
<dbReference type="GO" id="GO:0022627">
    <property type="term" value="C:cytosolic small ribosomal subunit"/>
    <property type="evidence" value="ECO:0007669"/>
    <property type="project" value="TreeGrafter"/>
</dbReference>
<dbReference type="GO" id="GO:0003735">
    <property type="term" value="F:structural constituent of ribosome"/>
    <property type="evidence" value="ECO:0007669"/>
    <property type="project" value="InterPro"/>
</dbReference>
<dbReference type="GO" id="GO:0006412">
    <property type="term" value="P:translation"/>
    <property type="evidence" value="ECO:0007669"/>
    <property type="project" value="UniProtKB-UniRule"/>
</dbReference>
<dbReference type="CDD" id="cd01425">
    <property type="entry name" value="RPS2"/>
    <property type="match status" value="1"/>
</dbReference>
<dbReference type="FunFam" id="1.10.287.610:FF:000001">
    <property type="entry name" value="30S ribosomal protein S2"/>
    <property type="match status" value="1"/>
</dbReference>
<dbReference type="Gene3D" id="3.40.50.10490">
    <property type="entry name" value="Glucose-6-phosphate isomerase like protein, domain 1"/>
    <property type="match status" value="1"/>
</dbReference>
<dbReference type="Gene3D" id="1.10.287.610">
    <property type="entry name" value="Helix hairpin bin"/>
    <property type="match status" value="1"/>
</dbReference>
<dbReference type="HAMAP" id="MF_00291_B">
    <property type="entry name" value="Ribosomal_uS2_B"/>
    <property type="match status" value="1"/>
</dbReference>
<dbReference type="InterPro" id="IPR001865">
    <property type="entry name" value="Ribosomal_uS2"/>
</dbReference>
<dbReference type="InterPro" id="IPR005706">
    <property type="entry name" value="Ribosomal_uS2_bac/mit/plastid"/>
</dbReference>
<dbReference type="InterPro" id="IPR018130">
    <property type="entry name" value="Ribosomal_uS2_CS"/>
</dbReference>
<dbReference type="InterPro" id="IPR023591">
    <property type="entry name" value="Ribosomal_uS2_flav_dom_sf"/>
</dbReference>
<dbReference type="NCBIfam" id="TIGR01011">
    <property type="entry name" value="rpsB_bact"/>
    <property type="match status" value="1"/>
</dbReference>
<dbReference type="PANTHER" id="PTHR12534">
    <property type="entry name" value="30S RIBOSOMAL PROTEIN S2 PROKARYOTIC AND ORGANELLAR"/>
    <property type="match status" value="1"/>
</dbReference>
<dbReference type="PANTHER" id="PTHR12534:SF0">
    <property type="entry name" value="SMALL RIBOSOMAL SUBUNIT PROTEIN US2M"/>
    <property type="match status" value="1"/>
</dbReference>
<dbReference type="Pfam" id="PF00318">
    <property type="entry name" value="Ribosomal_S2"/>
    <property type="match status" value="1"/>
</dbReference>
<dbReference type="PRINTS" id="PR00395">
    <property type="entry name" value="RIBOSOMALS2"/>
</dbReference>
<dbReference type="SUPFAM" id="SSF52313">
    <property type="entry name" value="Ribosomal protein S2"/>
    <property type="match status" value="1"/>
</dbReference>
<dbReference type="PROSITE" id="PS00962">
    <property type="entry name" value="RIBOSOMAL_S2_1"/>
    <property type="match status" value="1"/>
</dbReference>
<proteinExistence type="inferred from homology"/>
<feature type="chain" id="PRO_0000134119" description="Small ribosomal subunit protein uS2">
    <location>
        <begin position="1"/>
        <end position="265"/>
    </location>
</feature>
<feature type="region of interest" description="Disordered" evidence="2">
    <location>
        <begin position="231"/>
        <end position="265"/>
    </location>
</feature>
<gene>
    <name evidence="1" type="primary">rpsB</name>
    <name evidence="1" type="synonym">rps2</name>
    <name type="ordered locus">all4792</name>
</gene>
<organism>
    <name type="scientific">Nostoc sp. (strain PCC 7120 / SAG 25.82 / UTEX 2576)</name>
    <dbReference type="NCBI Taxonomy" id="103690"/>
    <lineage>
        <taxon>Bacteria</taxon>
        <taxon>Bacillati</taxon>
        <taxon>Cyanobacteriota</taxon>
        <taxon>Cyanophyceae</taxon>
        <taxon>Nostocales</taxon>
        <taxon>Nostocaceae</taxon>
        <taxon>Nostoc</taxon>
    </lineage>
</organism>
<sequence>MPVVSLAQMMESGVHFGHQTRRWNPKMSPYIYTSRNGVHIIDLVQTAHLMDEAYNYMRSQAEQGKKFLFVGTKRQAAGIIAQEAARCGSHYINQRWLGGMLTNWATIKTRVDRLKDLERREESGALDLLPKKEASMLRRELAKLQKYLGGIKTMRKVPDVVVIVDQRREYNAVQECQKLSIPIVSMLDTNCDPDVVDIPIPANDDAIRSIKLIVGKLADAIYEGRHGQLDVEEEYEDYEGSEEDYDYDETEYADSVIPEDGEEAE</sequence>